<organismHost>
    <name type="scientific">Gallus gallus</name>
    <name type="common">Chicken</name>
    <dbReference type="NCBI Taxonomy" id="9031"/>
</organismHost>
<comment type="function">
    <text evidence="1 2">Component of the viral envelope that plays a central role in virus morphogenesis and assembly via its interactions with other viral proteins.</text>
</comment>
<comment type="subunit">
    <text evidence="1 2">Homomultimer. Interacts with envelope E protein in the budding compartment of the host cell, which is located between endoplasmic reticulum and the Golgi complex. Forms a complex with HE and S proteins. Interacts with nucleocapsid N protein. This interaction probably participates in RNA packaging into the virus.</text>
</comment>
<comment type="subcellular location">
    <subcellularLocation>
        <location evidence="1">Virion membrane</location>
        <topology evidence="1">Multi-pass membrane protein</topology>
    </subcellularLocation>
    <subcellularLocation>
        <location evidence="1">Host Golgi apparatus membrane</location>
        <topology evidence="1">Multi-pass membrane protein</topology>
    </subcellularLocation>
    <text evidence="1">Largely embedded in the lipid bilayer.</text>
</comment>
<comment type="similarity">
    <text evidence="1">Belongs to the gammacoronaviruses M protein family.</text>
</comment>
<organism>
    <name type="scientific">Avian infectious bronchitis virus (strain Beaudette CK)</name>
    <name type="common">IBV</name>
    <dbReference type="NCBI Taxonomy" id="160235"/>
    <lineage>
        <taxon>Viruses</taxon>
        <taxon>Riboviria</taxon>
        <taxon>Orthornavirae</taxon>
        <taxon>Pisuviricota</taxon>
        <taxon>Pisoniviricetes</taxon>
        <taxon>Nidovirales</taxon>
        <taxon>Cornidovirineae</taxon>
        <taxon>Coronaviridae</taxon>
        <taxon>Orthocoronavirinae</taxon>
        <taxon>Gammacoronavirus</taxon>
        <taxon>Igacovirus</taxon>
        <taxon>Avian coronavirus</taxon>
    </lineage>
</organism>
<reference key="1">
    <citation type="journal article" date="2001" name="J. Virol.">
        <title>Reverse genetics system for the avian coronavirus infectious bronchitis virus.</title>
        <authorList>
            <person name="Casais R."/>
            <person name="Thiel V."/>
            <person name="Siddell S.G."/>
            <person name="Cavanagh D."/>
            <person name="Britton P."/>
        </authorList>
    </citation>
    <scope>NUCLEOTIDE SEQUENCE [GENOMIC RNA]</scope>
</reference>
<keyword id="KW-0325">Glycoprotein</keyword>
<keyword id="KW-1040">Host Golgi apparatus</keyword>
<keyword id="KW-1043">Host membrane</keyword>
<keyword id="KW-0472">Membrane</keyword>
<keyword id="KW-0812">Transmembrane</keyword>
<keyword id="KW-1133">Transmembrane helix</keyword>
<keyword id="KW-0261">Viral envelope protein</keyword>
<keyword id="KW-0468">Viral matrix protein</keyword>
<keyword id="KW-0946">Virion</keyword>
<protein>
    <recommendedName>
        <fullName evidence="1">Membrane protein</fullName>
        <shortName evidence="1">M protein</shortName>
    </recommendedName>
    <alternativeName>
        <fullName evidence="1">E1 glycoprotein</fullName>
    </alternativeName>
    <alternativeName>
        <fullName evidence="1">Matrix glycoprotein</fullName>
    </alternativeName>
    <alternativeName>
        <fullName evidence="1">Membrane glycoprotein</fullName>
    </alternativeName>
</protein>
<proteinExistence type="inferred from homology"/>
<evidence type="ECO:0000255" key="1">
    <source>
        <dbReference type="HAMAP-Rule" id="MF_04203"/>
    </source>
</evidence>
<evidence type="ECO:0000255" key="2">
    <source>
        <dbReference type="PROSITE-ProRule" id="PRU01275"/>
    </source>
</evidence>
<dbReference type="EMBL" id="AJ311317">
    <property type="protein sequence ID" value="CAC39118.1"/>
    <property type="molecule type" value="Genomic_RNA"/>
</dbReference>
<dbReference type="SMR" id="P69602"/>
<dbReference type="Proteomes" id="UP000114388">
    <property type="component" value="Genome"/>
</dbReference>
<dbReference type="GO" id="GO:0044178">
    <property type="term" value="C:host cell Golgi membrane"/>
    <property type="evidence" value="ECO:0007669"/>
    <property type="project" value="UniProtKB-SubCell"/>
</dbReference>
<dbReference type="GO" id="GO:0016020">
    <property type="term" value="C:membrane"/>
    <property type="evidence" value="ECO:0007669"/>
    <property type="project" value="UniProtKB-UniRule"/>
</dbReference>
<dbReference type="GO" id="GO:0019031">
    <property type="term" value="C:viral envelope"/>
    <property type="evidence" value="ECO:0007669"/>
    <property type="project" value="UniProtKB-UniRule"/>
</dbReference>
<dbReference type="GO" id="GO:0055036">
    <property type="term" value="C:virion membrane"/>
    <property type="evidence" value="ECO:0007669"/>
    <property type="project" value="UniProtKB-SubCell"/>
</dbReference>
<dbReference type="GO" id="GO:0039660">
    <property type="term" value="F:structural constituent of virion"/>
    <property type="evidence" value="ECO:0007669"/>
    <property type="project" value="UniProtKB-UniRule"/>
</dbReference>
<dbReference type="CDD" id="cd21566">
    <property type="entry name" value="gammaCoV_M"/>
    <property type="match status" value="1"/>
</dbReference>
<dbReference type="HAMAP" id="MF_04203">
    <property type="entry name" value="GAMMA_CORONA_M"/>
    <property type="match status" value="1"/>
</dbReference>
<dbReference type="InterPro" id="IPR042550">
    <property type="entry name" value="GAMMA_CORONA_M"/>
</dbReference>
<dbReference type="InterPro" id="IPR002574">
    <property type="entry name" value="M_CoV"/>
</dbReference>
<dbReference type="Pfam" id="PF01635">
    <property type="entry name" value="CoV_M"/>
    <property type="match status" value="1"/>
</dbReference>
<dbReference type="PROSITE" id="PS51927">
    <property type="entry name" value="COV_M"/>
    <property type="match status" value="1"/>
</dbReference>
<name>VME1_IBVBC</name>
<sequence>MPNETNCTLDFEQSVQLFKEYNLFITAFLLFLTIILQYGYATRSKVIYTLKMIVLWCFWPLNIAVGVISCTYPPNTGGLVAAIILTVFACLSFVGYWIQSIRLFKRCRSWWSFNPESNAVGSILLTNGQQCNFAIESVPMVLSPIIKNGVLYCEGQWLAKCEPDHLPKDIFVCTPDRRNIYRMVQKYTGDQSGNKKRFATFVYAKQSVDTGELESVATGGSSLYT</sequence>
<gene>
    <name evidence="1" type="primary">M</name>
</gene>
<accession>P69602</accession>
<accession>P04327</accession>
<feature type="chain" id="PRO_0000106048" description="Membrane protein">
    <location>
        <begin position="1"/>
        <end position="225"/>
    </location>
</feature>
<feature type="topological domain" description="Virion surface" evidence="1">
    <location>
        <begin position="1"/>
        <end position="20"/>
    </location>
</feature>
<feature type="transmembrane region" description="Helical" evidence="1">
    <location>
        <begin position="21"/>
        <end position="41"/>
    </location>
</feature>
<feature type="topological domain" description="Intravirion" evidence="1">
    <location>
        <begin position="42"/>
        <end position="51"/>
    </location>
</feature>
<feature type="transmembrane region" description="Helical" evidence="1">
    <location>
        <begin position="52"/>
        <end position="72"/>
    </location>
</feature>
<feature type="topological domain" description="Virion surface" evidence="1">
    <location>
        <begin position="73"/>
        <end position="77"/>
    </location>
</feature>
<feature type="transmembrane region" description="Helical" evidence="1">
    <location>
        <begin position="78"/>
        <end position="98"/>
    </location>
</feature>
<feature type="topological domain" description="Intravirion" evidence="1">
    <location>
        <begin position="99"/>
        <end position="225"/>
    </location>
</feature>